<organism>
    <name type="scientific">Lachnoclostridium phytofermentans (strain ATCC 700394 / DSM 18823 / ISDg)</name>
    <name type="common">Clostridium phytofermentans</name>
    <dbReference type="NCBI Taxonomy" id="357809"/>
    <lineage>
        <taxon>Bacteria</taxon>
        <taxon>Bacillati</taxon>
        <taxon>Bacillota</taxon>
        <taxon>Clostridia</taxon>
        <taxon>Lachnospirales</taxon>
        <taxon>Lachnospiraceae</taxon>
    </lineage>
</organism>
<dbReference type="EC" id="5.4.2.11" evidence="1"/>
<dbReference type="EMBL" id="CP000885">
    <property type="protein sequence ID" value="ABX43012.1"/>
    <property type="molecule type" value="Genomic_DNA"/>
</dbReference>
<dbReference type="RefSeq" id="WP_012200664.1">
    <property type="nucleotide sequence ID" value="NC_010001.1"/>
</dbReference>
<dbReference type="SMR" id="A9KN01"/>
<dbReference type="STRING" id="357809.Cphy_2651"/>
<dbReference type="KEGG" id="cpy:Cphy_2651"/>
<dbReference type="eggNOG" id="COG0588">
    <property type="taxonomic scope" value="Bacteria"/>
</dbReference>
<dbReference type="HOGENOM" id="CLU_033323_1_1_9"/>
<dbReference type="OrthoDB" id="9781415at2"/>
<dbReference type="UniPathway" id="UPA00109">
    <property type="reaction ID" value="UER00186"/>
</dbReference>
<dbReference type="Proteomes" id="UP000000370">
    <property type="component" value="Chromosome"/>
</dbReference>
<dbReference type="GO" id="GO:0004619">
    <property type="term" value="F:phosphoglycerate mutase activity"/>
    <property type="evidence" value="ECO:0007669"/>
    <property type="project" value="UniProtKB-EC"/>
</dbReference>
<dbReference type="GO" id="GO:0006094">
    <property type="term" value="P:gluconeogenesis"/>
    <property type="evidence" value="ECO:0007669"/>
    <property type="project" value="UniProtKB-UniRule"/>
</dbReference>
<dbReference type="GO" id="GO:0006096">
    <property type="term" value="P:glycolytic process"/>
    <property type="evidence" value="ECO:0007669"/>
    <property type="project" value="UniProtKB-UniRule"/>
</dbReference>
<dbReference type="CDD" id="cd07067">
    <property type="entry name" value="HP_PGM_like"/>
    <property type="match status" value="1"/>
</dbReference>
<dbReference type="FunFam" id="3.40.50.1240:FF:000003">
    <property type="entry name" value="2,3-bisphosphoglycerate-dependent phosphoglycerate mutase"/>
    <property type="match status" value="1"/>
</dbReference>
<dbReference type="Gene3D" id="3.40.50.1240">
    <property type="entry name" value="Phosphoglycerate mutase-like"/>
    <property type="match status" value="1"/>
</dbReference>
<dbReference type="HAMAP" id="MF_01039">
    <property type="entry name" value="PGAM_GpmA"/>
    <property type="match status" value="1"/>
</dbReference>
<dbReference type="InterPro" id="IPR013078">
    <property type="entry name" value="His_Pase_superF_clade-1"/>
</dbReference>
<dbReference type="InterPro" id="IPR029033">
    <property type="entry name" value="His_PPase_superfam"/>
</dbReference>
<dbReference type="InterPro" id="IPR001345">
    <property type="entry name" value="PG/BPGM_mutase_AS"/>
</dbReference>
<dbReference type="InterPro" id="IPR005952">
    <property type="entry name" value="Phosphogly_mut1"/>
</dbReference>
<dbReference type="NCBIfam" id="TIGR01258">
    <property type="entry name" value="pgm_1"/>
    <property type="match status" value="1"/>
</dbReference>
<dbReference type="NCBIfam" id="NF010713">
    <property type="entry name" value="PRK14115.1"/>
    <property type="match status" value="1"/>
</dbReference>
<dbReference type="PANTHER" id="PTHR11931">
    <property type="entry name" value="PHOSPHOGLYCERATE MUTASE"/>
    <property type="match status" value="1"/>
</dbReference>
<dbReference type="Pfam" id="PF00300">
    <property type="entry name" value="His_Phos_1"/>
    <property type="match status" value="2"/>
</dbReference>
<dbReference type="PIRSF" id="PIRSF000709">
    <property type="entry name" value="6PFK_2-Ptase"/>
    <property type="match status" value="1"/>
</dbReference>
<dbReference type="SMART" id="SM00855">
    <property type="entry name" value="PGAM"/>
    <property type="match status" value="1"/>
</dbReference>
<dbReference type="SUPFAM" id="SSF53254">
    <property type="entry name" value="Phosphoglycerate mutase-like"/>
    <property type="match status" value="1"/>
</dbReference>
<dbReference type="PROSITE" id="PS00175">
    <property type="entry name" value="PG_MUTASE"/>
    <property type="match status" value="1"/>
</dbReference>
<keyword id="KW-0312">Gluconeogenesis</keyword>
<keyword id="KW-0324">Glycolysis</keyword>
<keyword id="KW-0413">Isomerase</keyword>
<keyword id="KW-1185">Reference proteome</keyword>
<protein>
    <recommendedName>
        <fullName evidence="1">2,3-bisphosphoglycerate-dependent phosphoglycerate mutase</fullName>
        <shortName evidence="1">BPG-dependent PGAM</shortName>
        <shortName evidence="1">PGAM</shortName>
        <shortName evidence="1">Phosphoglyceromutase</shortName>
        <shortName evidence="1">dPGM</shortName>
        <ecNumber evidence="1">5.4.2.11</ecNumber>
    </recommendedName>
</protein>
<evidence type="ECO:0000255" key="1">
    <source>
        <dbReference type="HAMAP-Rule" id="MF_01039"/>
    </source>
</evidence>
<name>GPMA_LACP7</name>
<comment type="function">
    <text evidence="1">Catalyzes the interconversion of 2-phosphoglycerate and 3-phosphoglycerate.</text>
</comment>
<comment type="catalytic activity">
    <reaction evidence="1">
        <text>(2R)-2-phosphoglycerate = (2R)-3-phosphoglycerate</text>
        <dbReference type="Rhea" id="RHEA:15901"/>
        <dbReference type="ChEBI" id="CHEBI:58272"/>
        <dbReference type="ChEBI" id="CHEBI:58289"/>
        <dbReference type="EC" id="5.4.2.11"/>
    </reaction>
</comment>
<comment type="pathway">
    <text evidence="1">Carbohydrate degradation; glycolysis; pyruvate from D-glyceraldehyde 3-phosphate: step 3/5.</text>
</comment>
<comment type="similarity">
    <text evidence="1">Belongs to the phosphoglycerate mutase family. BPG-dependent PGAM subfamily.</text>
</comment>
<accession>A9KN01</accession>
<feature type="chain" id="PRO_1000084323" description="2,3-bisphosphoglycerate-dependent phosphoglycerate mutase">
    <location>
        <begin position="1"/>
        <end position="249"/>
    </location>
</feature>
<feature type="active site" description="Tele-phosphohistidine intermediate" evidence="1">
    <location>
        <position position="8"/>
    </location>
</feature>
<feature type="active site" description="Proton donor/acceptor" evidence="1">
    <location>
        <position position="86"/>
    </location>
</feature>
<feature type="binding site" evidence="1">
    <location>
        <begin position="7"/>
        <end position="14"/>
    </location>
    <ligand>
        <name>substrate</name>
    </ligand>
</feature>
<feature type="binding site" evidence="1">
    <location>
        <begin position="20"/>
        <end position="21"/>
    </location>
    <ligand>
        <name>substrate</name>
    </ligand>
</feature>
<feature type="binding site" evidence="1">
    <location>
        <position position="59"/>
    </location>
    <ligand>
        <name>substrate</name>
    </ligand>
</feature>
<feature type="binding site" evidence="1">
    <location>
        <begin position="86"/>
        <end position="89"/>
    </location>
    <ligand>
        <name>substrate</name>
    </ligand>
</feature>
<feature type="binding site" evidence="1">
    <location>
        <position position="97"/>
    </location>
    <ligand>
        <name>substrate</name>
    </ligand>
</feature>
<feature type="binding site" evidence="1">
    <location>
        <begin position="113"/>
        <end position="114"/>
    </location>
    <ligand>
        <name>substrate</name>
    </ligand>
</feature>
<feature type="binding site" evidence="1">
    <location>
        <begin position="182"/>
        <end position="183"/>
    </location>
    <ligand>
        <name>substrate</name>
    </ligand>
</feature>
<feature type="site" description="Transition state stabilizer" evidence="1">
    <location>
        <position position="181"/>
    </location>
</feature>
<proteinExistence type="inferred from homology"/>
<reference key="1">
    <citation type="submission" date="2007-11" db="EMBL/GenBank/DDBJ databases">
        <title>Complete genome sequence of Clostridium phytofermentans ISDg.</title>
        <authorList>
            <person name="Leschine S.B."/>
            <person name="Warnick T.A."/>
            <person name="Blanchard J.L."/>
            <person name="Schnell D.J."/>
            <person name="Petit E.L."/>
            <person name="LaTouf W.G."/>
            <person name="Copeland A."/>
            <person name="Lucas S."/>
            <person name="Lapidus A."/>
            <person name="Barry K."/>
            <person name="Glavina del Rio T."/>
            <person name="Dalin E."/>
            <person name="Tice H."/>
            <person name="Pitluck S."/>
            <person name="Kiss H."/>
            <person name="Brettin T."/>
            <person name="Bruce D."/>
            <person name="Detter J.C."/>
            <person name="Han C."/>
            <person name="Kuske C."/>
            <person name="Schmutz J."/>
            <person name="Larimer F."/>
            <person name="Land M."/>
            <person name="Hauser L."/>
            <person name="Kyrpides N."/>
            <person name="Kim E.A."/>
            <person name="Richardson P."/>
        </authorList>
    </citation>
    <scope>NUCLEOTIDE SEQUENCE [LARGE SCALE GENOMIC DNA]</scope>
    <source>
        <strain>ATCC 700394 / DSM 18823 / ISDg</strain>
    </source>
</reference>
<gene>
    <name evidence="1" type="primary">gpmA</name>
    <name type="ordered locus">Cphy_2651</name>
</gene>
<sequence length="249" mass="28709">MKLVLLRHGESEWNKENLFTGWMDVDLSETGKAEAASAGITLKQKGYDFDVCYTSYLKRAIHTLNLALDEMDRVWLPVVKSWKLNERHYGTLQGLNKSETAERYGEEQVKIWRRSYDIAPPLLKEEDERNPRFQEQYRQEKCEILPLGESLKDTIARVVPYYNEVILKDMMAGKRVLIAAHGNSLRALMKYLEDMSPEDILNVNLPTGIPLVYELDEEGKFISKEYLGDAEYVKAKIEKVSAQGKVTIE</sequence>